<sequence length="523" mass="58259">MASLLKSLSLFKKTREQPPLASGSGGAIRGIKHVIIVLIPGDSSIVTRSRLLDRLVRMVGDPEVSGPKLTGVLISILSLFVESPGQLIQRIIDDPDISIKLVEVIPSINSTCGLTFASRGASLDAEADEFFGTMDEGSKDHNQMGWLENKDIIDIEVNDAEQFNILLASILAQIWILLAKAVTAPDTAADSEMRRWIKYTQQRRVIGEFRMNKIWLDIVRNRIAEDLSLRRFMVALILDIKRSPGNKPRIAEMICDIDNYIVEAGLASFILTIKFGIETMYPALGLHEFSGELTTIESLMVLYQQMGETAPYMVILENSVQNKFSAGSYPLLWSYAMGVGVELENSMGGLNFGRSYFDPAYFRLGQEMVRRSAGKVSSTFAAEFGITKEEAQLVSEIVSRTTEDRTTRATGPKQSQITFLHSERNEAPNQRLPPITMKSEFQGGDKYSNQLIDDRLSGYTSDVQSSEWDESRQITQLTQEGDHDNDQQSMDGLAKMRQLTKILNQSDTNGEVSPAHNDRDLLS</sequence>
<protein>
    <recommendedName>
        <fullName>Nucleoprotein</fullName>
    </recommendedName>
    <alternativeName>
        <fullName>Nucleocapsid protein</fullName>
        <shortName>NP</shortName>
        <shortName>Protein N</shortName>
    </alternativeName>
</protein>
<comment type="function">
    <text evidence="2 5">Forms the helical nucleocapsid (NC) in a ratio of 1 N per 6 ribonucleotides, protecting the genome from nucleases. The nucleocapsid (NC) has a helical structure with either 12.35 or 11.64 N per turn, approximately 20 nm in diameter, with a hollow central cavity approximately 5 nm in diameter (By similarity). The encapsidated genomic RNA serves as template for transcription and replication; encapsidation by N is coupled to RNA synthesis. Forms the encapsidation complex with the phosphoprotein protein P. Before encapsidation, the newly synthesized free N protein, so-called N0, is chaperoned by P (By similarity). Participates, together with P, in the formation of viral factories (viroplasms), which are large inclusions in the host cytoplasm where replication takes place (By similarity).</text>
</comment>
<comment type="subunit">
    <text evidence="1 2 4 5">Homomultimer; forms the nucleocapsid (By similarity). Binds to viral genomic RNA (By similarity). N0 interacts (via Ncore) with the phosphoprotein (via N-terminus); this interaction allows P to chaperon N0 to avoid N polymerization before encapsidation (By similarity). Interacts as N-RNA template with the phosphoprotein (via C-terminus); this interaction positions the polymerase on the template (By similarity). Interacts with the phosphoprotein; this interaction leads to the formation of membraneless organelles that function as viral replication factories (By similarity).</text>
</comment>
<comment type="subcellular location">
    <subcellularLocation>
        <location evidence="7">Virion</location>
    </subcellularLocation>
    <subcellularLocation>
        <location evidence="7">Host cytoplasm</location>
    </subcellularLocation>
</comment>
<comment type="domain">
    <text evidence="6">Ncore is globular and carries regions required for N self-assembly and RNA-binding. Ntail is an intrinsically disordered monomeric domain in the C-terminus.</text>
</comment>
<comment type="similarity">
    <text evidence="9">Belongs to the paramyxoviruses nucleocapsid family.</text>
</comment>
<organism>
    <name type="scientific">Phocine distemper virus</name>
    <name type="common">PDV</name>
    <dbReference type="NCBI Taxonomy" id="11240"/>
    <lineage>
        <taxon>Viruses</taxon>
        <taxon>Riboviria</taxon>
        <taxon>Orthornavirae</taxon>
        <taxon>Negarnaviricota</taxon>
        <taxon>Haploviricotina</taxon>
        <taxon>Monjiviricetes</taxon>
        <taxon>Mononegavirales</taxon>
        <taxon>Paramyxoviridae</taxon>
        <taxon>Orthoparamyxovirinae</taxon>
        <taxon>Morbillivirus</taxon>
        <taxon>Morbillivirus phocae</taxon>
    </lineage>
</organism>
<dbReference type="EMBL" id="X75717">
    <property type="protein sequence ID" value="CAA53376.1"/>
    <property type="molecule type" value="Genomic_RNA"/>
</dbReference>
<dbReference type="EMBL" id="D10371">
    <property type="protein sequence ID" value="BAA01202.1"/>
    <property type="molecule type" value="Genomic_RNA"/>
</dbReference>
<dbReference type="PIR" id="JQ1608">
    <property type="entry name" value="JQ1608"/>
</dbReference>
<dbReference type="SMR" id="P35944"/>
<dbReference type="GO" id="GO:0019029">
    <property type="term" value="C:helical viral capsid"/>
    <property type="evidence" value="ECO:0007669"/>
    <property type="project" value="UniProtKB-KW"/>
</dbReference>
<dbReference type="GO" id="GO:0030430">
    <property type="term" value="C:host cell cytoplasm"/>
    <property type="evidence" value="ECO:0007669"/>
    <property type="project" value="UniProtKB-SubCell"/>
</dbReference>
<dbReference type="GO" id="GO:1990904">
    <property type="term" value="C:ribonucleoprotein complex"/>
    <property type="evidence" value="ECO:0007669"/>
    <property type="project" value="UniProtKB-KW"/>
</dbReference>
<dbReference type="GO" id="GO:0019013">
    <property type="term" value="C:viral nucleocapsid"/>
    <property type="evidence" value="ECO:0007669"/>
    <property type="project" value="UniProtKB-KW"/>
</dbReference>
<dbReference type="GO" id="GO:0003723">
    <property type="term" value="F:RNA binding"/>
    <property type="evidence" value="ECO:0007669"/>
    <property type="project" value="UniProtKB-KW"/>
</dbReference>
<dbReference type="GO" id="GO:0005198">
    <property type="term" value="F:structural molecule activity"/>
    <property type="evidence" value="ECO:0007669"/>
    <property type="project" value="InterPro"/>
</dbReference>
<dbReference type="InterPro" id="IPR002021">
    <property type="entry name" value="Paramyx_ncap"/>
</dbReference>
<dbReference type="Pfam" id="PF00973">
    <property type="entry name" value="Paramyxo_ncap"/>
    <property type="match status" value="1"/>
</dbReference>
<keyword id="KW-0167">Capsid protein</keyword>
<keyword id="KW-1139">Helical capsid protein</keyword>
<keyword id="KW-1035">Host cytoplasm</keyword>
<keyword id="KW-0687">Ribonucleoprotein</keyword>
<keyword id="KW-0694">RNA-binding</keyword>
<keyword id="KW-0543">Viral nucleoprotein</keyword>
<keyword id="KW-0946">Virion</keyword>
<feature type="chain" id="PRO_0000142665" description="Nucleoprotein">
    <location>
        <begin position="1"/>
        <end position="523"/>
    </location>
</feature>
<feature type="region of interest" description="Ncore" evidence="2">
    <location>
        <begin position="1"/>
        <end position="403"/>
    </location>
</feature>
<feature type="region of interest" description="RNA packaging and organization of the helical nucleocapsid" evidence="6">
    <location>
        <begin position="1"/>
        <end position="375"/>
    </location>
</feature>
<feature type="region of interest" description="Homomultimerization" evidence="3">
    <location>
        <begin position="1"/>
        <end position="36"/>
    </location>
</feature>
<feature type="region of interest" description="Homomultimerization" evidence="3">
    <location>
        <begin position="373"/>
        <end position="391"/>
    </location>
</feature>
<feature type="region of interest" description="Ntail" evidence="2">
    <location>
        <begin position="404"/>
        <end position="523"/>
    </location>
</feature>
<feature type="region of interest" description="Disordered" evidence="8">
    <location>
        <begin position="423"/>
        <end position="442"/>
    </location>
</feature>
<feature type="region of interest" description="Interaction with the phosphoprotein" evidence="5">
    <location>
        <begin position="477"/>
        <end position="503"/>
    </location>
</feature>
<feature type="region of interest" description="Disordered" evidence="8">
    <location>
        <begin position="500"/>
        <end position="523"/>
    </location>
</feature>
<feature type="compositionally biased region" description="Polar residues" evidence="8">
    <location>
        <begin position="501"/>
        <end position="511"/>
    </location>
</feature>
<feature type="binding site" evidence="5">
    <location>
        <position position="180"/>
    </location>
    <ligand>
        <name>RNA</name>
        <dbReference type="ChEBI" id="CHEBI:33697"/>
    </ligand>
</feature>
<feature type="binding site" evidence="5">
    <location>
        <position position="195"/>
    </location>
    <ligand>
        <name>RNA</name>
        <dbReference type="ChEBI" id="CHEBI:33697"/>
    </ligand>
</feature>
<feature type="binding site" evidence="5">
    <location>
        <position position="202"/>
    </location>
    <ligand>
        <name>RNA</name>
        <dbReference type="ChEBI" id="CHEBI:33697"/>
    </ligand>
</feature>
<feature type="binding site" evidence="5">
    <location>
        <position position="260"/>
    </location>
    <ligand>
        <name>RNA</name>
        <dbReference type="ChEBI" id="CHEBI:33697"/>
    </ligand>
</feature>
<feature type="binding site" evidence="5">
    <location>
        <position position="351"/>
    </location>
    <ligand>
        <name>RNA</name>
        <dbReference type="ChEBI" id="CHEBI:33697"/>
    </ligand>
</feature>
<feature type="sequence variant" description="In strain: Isolate Ulster/88.">
    <original>DG</original>
    <variation>EA</variation>
    <location>
        <begin position="491"/>
        <end position="492"/>
    </location>
</feature>
<feature type="sequence variant" description="In strain: Isolate Ulster/88.">
    <original>H</original>
    <variation>Y</variation>
    <location>
        <position position="516"/>
    </location>
</feature>
<organismHost>
    <name type="scientific">Phocidae</name>
    <name type="common">true seals</name>
    <dbReference type="NCBI Taxonomy" id="9709"/>
</organismHost>
<evidence type="ECO:0000250" key="1">
    <source>
        <dbReference type="UniProtKB" id="O57286"/>
    </source>
</evidence>
<evidence type="ECO:0000250" key="2">
    <source>
        <dbReference type="UniProtKB" id="P06159"/>
    </source>
</evidence>
<evidence type="ECO:0000250" key="3">
    <source>
        <dbReference type="UniProtKB" id="P10050"/>
    </source>
</evidence>
<evidence type="ECO:0000250" key="4">
    <source>
        <dbReference type="UniProtKB" id="Q07097"/>
    </source>
</evidence>
<evidence type="ECO:0000250" key="5">
    <source>
        <dbReference type="UniProtKB" id="Q77M43"/>
    </source>
</evidence>
<evidence type="ECO:0000250" key="6">
    <source>
        <dbReference type="UniProtKB" id="Q89933"/>
    </source>
</evidence>
<evidence type="ECO:0000250" key="7">
    <source>
        <dbReference type="UniProtKB" id="Q9WMB5"/>
    </source>
</evidence>
<evidence type="ECO:0000256" key="8">
    <source>
        <dbReference type="SAM" id="MobiDB-lite"/>
    </source>
</evidence>
<evidence type="ECO:0000305" key="9"/>
<reference key="1">
    <citation type="journal article" date="1992" name="J. Gen. Virol.">
        <title>Sequence analysis of the genes encoding the nucleocapsid protein and phosphoprotein (P) of phocid distemper virus, and editing of the P gene transcript.</title>
        <authorList>
            <person name="Blixenkrone-Moeller M."/>
            <person name="Sharma B."/>
            <person name="Varsanyi T."/>
            <person name="Hu A."/>
            <person name="Norrby E."/>
            <person name="Koevamees J."/>
        </authorList>
    </citation>
    <scope>NUCLEOTIDE SEQUENCE [GENOMIC RNA]</scope>
    <source>
        <strain>Isolate DK88-4A</strain>
    </source>
</reference>
<reference key="2">
    <citation type="journal article" date="1992" name="J. Gen. Virol.">
        <title>Molecular characterization of phocine distemper virus: gene order and sequence of the gene encoding the attachment (H) protein.</title>
        <authorList>
            <person name="Curran M.D."/>
            <person name="O'Loan D."/>
            <person name="Kennedy S."/>
            <person name="Rima B.K."/>
        </authorList>
    </citation>
    <scope>NUCLEOTIDE SEQUENCE [GENOMIC RNA] OF 392-523</scope>
    <source>
        <strain>Isolate Ulster/88</strain>
    </source>
</reference>
<accession>P35944</accession>
<gene>
    <name type="primary">N</name>
    <name type="synonym">NP</name>
</gene>
<proteinExistence type="inferred from homology"/>
<name>NCAP_PHODV</name>